<comment type="function">
    <text evidence="1">Involved in the modulation of the specificity of the ClpAP-mediated ATP-dependent protein degradation.</text>
</comment>
<comment type="subunit">
    <text evidence="1">Binds to the N-terminal domain of the chaperone ClpA.</text>
</comment>
<comment type="similarity">
    <text evidence="1">Belongs to the ClpS family.</text>
</comment>
<reference key="1">
    <citation type="journal article" date="2009" name="J. Bacteriol.">
        <title>Genome sequence of Azotobacter vinelandii, an obligate aerobe specialized to support diverse anaerobic metabolic processes.</title>
        <authorList>
            <person name="Setubal J.C."/>
            <person name="Dos Santos P."/>
            <person name="Goldman B.S."/>
            <person name="Ertesvaag H."/>
            <person name="Espin G."/>
            <person name="Rubio L.M."/>
            <person name="Valla S."/>
            <person name="Almeida N.F."/>
            <person name="Balasubramanian D."/>
            <person name="Cromes L."/>
            <person name="Curatti L."/>
            <person name="Du Z."/>
            <person name="Godsy E."/>
            <person name="Goodner B."/>
            <person name="Hellner-Burris K."/>
            <person name="Hernandez J.A."/>
            <person name="Houmiel K."/>
            <person name="Imperial J."/>
            <person name="Kennedy C."/>
            <person name="Larson T.J."/>
            <person name="Latreille P."/>
            <person name="Ligon L.S."/>
            <person name="Lu J."/>
            <person name="Maerk M."/>
            <person name="Miller N.M."/>
            <person name="Norton S."/>
            <person name="O'Carroll I.P."/>
            <person name="Paulsen I."/>
            <person name="Raulfs E.C."/>
            <person name="Roemer R."/>
            <person name="Rosser J."/>
            <person name="Segura D."/>
            <person name="Slater S."/>
            <person name="Stricklin S.L."/>
            <person name="Studholme D.J."/>
            <person name="Sun J."/>
            <person name="Viana C.J."/>
            <person name="Wallin E."/>
            <person name="Wang B."/>
            <person name="Wheeler C."/>
            <person name="Zhu H."/>
            <person name="Dean D.R."/>
            <person name="Dixon R."/>
            <person name="Wood D."/>
        </authorList>
    </citation>
    <scope>NUCLEOTIDE SEQUENCE [LARGE SCALE GENOMIC DNA]</scope>
    <source>
        <strain>DJ / ATCC BAA-1303</strain>
    </source>
</reference>
<gene>
    <name evidence="1" type="primary">clpS</name>
    <name type="ordered locus">Avin_28280</name>
</gene>
<dbReference type="EMBL" id="CP001157">
    <property type="protein sequence ID" value="ACO79000.1"/>
    <property type="molecule type" value="Genomic_DNA"/>
</dbReference>
<dbReference type="RefSeq" id="WP_012701387.1">
    <property type="nucleotide sequence ID" value="NC_012560.1"/>
</dbReference>
<dbReference type="SMR" id="C1DKZ8"/>
<dbReference type="STRING" id="322710.Avin_28280"/>
<dbReference type="EnsemblBacteria" id="ACO79000">
    <property type="protein sequence ID" value="ACO79000"/>
    <property type="gene ID" value="Avin_28280"/>
</dbReference>
<dbReference type="GeneID" id="88185946"/>
<dbReference type="KEGG" id="avn:Avin_28280"/>
<dbReference type="eggNOG" id="COG2127">
    <property type="taxonomic scope" value="Bacteria"/>
</dbReference>
<dbReference type="HOGENOM" id="CLU_134358_2_0_6"/>
<dbReference type="OrthoDB" id="9796121at2"/>
<dbReference type="Proteomes" id="UP000002424">
    <property type="component" value="Chromosome"/>
</dbReference>
<dbReference type="GO" id="GO:0030163">
    <property type="term" value="P:protein catabolic process"/>
    <property type="evidence" value="ECO:0007669"/>
    <property type="project" value="InterPro"/>
</dbReference>
<dbReference type="GO" id="GO:0006508">
    <property type="term" value="P:proteolysis"/>
    <property type="evidence" value="ECO:0007669"/>
    <property type="project" value="UniProtKB-UniRule"/>
</dbReference>
<dbReference type="FunFam" id="3.30.1390.10:FF:000002">
    <property type="entry name" value="ATP-dependent Clp protease adapter protein ClpS"/>
    <property type="match status" value="1"/>
</dbReference>
<dbReference type="Gene3D" id="3.30.1390.10">
    <property type="match status" value="1"/>
</dbReference>
<dbReference type="HAMAP" id="MF_00302">
    <property type="entry name" value="ClpS"/>
    <property type="match status" value="1"/>
</dbReference>
<dbReference type="InterPro" id="IPR022935">
    <property type="entry name" value="ClpS"/>
</dbReference>
<dbReference type="InterPro" id="IPR003769">
    <property type="entry name" value="ClpS_core"/>
</dbReference>
<dbReference type="InterPro" id="IPR014719">
    <property type="entry name" value="Ribosomal_bL12_C/ClpS-like"/>
</dbReference>
<dbReference type="NCBIfam" id="NF000669">
    <property type="entry name" value="PRK00033.1-2"/>
    <property type="match status" value="1"/>
</dbReference>
<dbReference type="NCBIfam" id="NF000672">
    <property type="entry name" value="PRK00033.1-5"/>
    <property type="match status" value="1"/>
</dbReference>
<dbReference type="PANTHER" id="PTHR33473:SF19">
    <property type="entry name" value="ATP-DEPENDENT CLP PROTEASE ADAPTER PROTEIN CLPS"/>
    <property type="match status" value="1"/>
</dbReference>
<dbReference type="PANTHER" id="PTHR33473">
    <property type="entry name" value="ATP-DEPENDENT CLP PROTEASE ADAPTER PROTEIN CLPS1, CHLOROPLASTIC"/>
    <property type="match status" value="1"/>
</dbReference>
<dbReference type="Pfam" id="PF02617">
    <property type="entry name" value="ClpS"/>
    <property type="match status" value="1"/>
</dbReference>
<dbReference type="SUPFAM" id="SSF54736">
    <property type="entry name" value="ClpS-like"/>
    <property type="match status" value="1"/>
</dbReference>
<accession>C1DKZ8</accession>
<sequence>MFASTEIRLTFCQDRPEPREDDSYGVVVQESKPALKVPPMYKVVMFNDDYTPMDFVVEVLEKFFNLNRELATKVMLTVHTEGRAVCGMFTRDVAETKAMQVNQYARECQHPLLCEIEKDG</sequence>
<feature type="chain" id="PRO_1000204969" description="ATP-dependent Clp protease adapter protein ClpS">
    <location>
        <begin position="1"/>
        <end position="120"/>
    </location>
</feature>
<evidence type="ECO:0000255" key="1">
    <source>
        <dbReference type="HAMAP-Rule" id="MF_00302"/>
    </source>
</evidence>
<name>CLPS_AZOVD</name>
<protein>
    <recommendedName>
        <fullName evidence="1">ATP-dependent Clp protease adapter protein ClpS</fullName>
    </recommendedName>
</protein>
<proteinExistence type="inferred from homology"/>
<organism>
    <name type="scientific">Azotobacter vinelandii (strain DJ / ATCC BAA-1303)</name>
    <dbReference type="NCBI Taxonomy" id="322710"/>
    <lineage>
        <taxon>Bacteria</taxon>
        <taxon>Pseudomonadati</taxon>
        <taxon>Pseudomonadota</taxon>
        <taxon>Gammaproteobacteria</taxon>
        <taxon>Pseudomonadales</taxon>
        <taxon>Pseudomonadaceae</taxon>
        <taxon>Azotobacter</taxon>
    </lineage>
</organism>